<proteinExistence type="evidence at protein level"/>
<organism>
    <name type="scientific">Geobacillus stearothermophilus</name>
    <name type="common">Bacillus stearothermophilus</name>
    <dbReference type="NCBI Taxonomy" id="1422"/>
    <lineage>
        <taxon>Bacteria</taxon>
        <taxon>Bacillati</taxon>
        <taxon>Bacillota</taxon>
        <taxon>Bacilli</taxon>
        <taxon>Bacillales</taxon>
        <taxon>Anoxybacillaceae</taxon>
        <taxon>Geobacillus</taxon>
    </lineage>
</organism>
<dbReference type="EC" id="1.1.1.1"/>
<dbReference type="EMBL" id="D90421">
    <property type="protein sequence ID" value="BAA14411.1"/>
    <property type="molecule type" value="Genomic_DNA"/>
</dbReference>
<dbReference type="PIR" id="A42654">
    <property type="entry name" value="A42654"/>
</dbReference>
<dbReference type="RefSeq" id="WP_033015595.1">
    <property type="nucleotide sequence ID" value="NZ_CBCSGJ010000010.1"/>
</dbReference>
<dbReference type="SMR" id="P12311"/>
<dbReference type="GeneID" id="89612727"/>
<dbReference type="GO" id="GO:0004022">
    <property type="term" value="F:alcohol dehydrogenase (NAD+) activity"/>
    <property type="evidence" value="ECO:0007669"/>
    <property type="project" value="UniProtKB-EC"/>
</dbReference>
<dbReference type="GO" id="GO:0008270">
    <property type="term" value="F:zinc ion binding"/>
    <property type="evidence" value="ECO:0007669"/>
    <property type="project" value="InterPro"/>
</dbReference>
<dbReference type="CDD" id="cd08297">
    <property type="entry name" value="CAD3"/>
    <property type="match status" value="1"/>
</dbReference>
<dbReference type="FunFam" id="3.40.50.720:FF:000039">
    <property type="entry name" value="Alcohol dehydrogenase AdhP"/>
    <property type="match status" value="1"/>
</dbReference>
<dbReference type="FunFam" id="3.90.180.10:FF:000002">
    <property type="entry name" value="Alcohol dehydrogenase AdhP"/>
    <property type="match status" value="1"/>
</dbReference>
<dbReference type="Gene3D" id="3.90.180.10">
    <property type="entry name" value="Medium-chain alcohol dehydrogenases, catalytic domain"/>
    <property type="match status" value="1"/>
</dbReference>
<dbReference type="Gene3D" id="3.40.50.720">
    <property type="entry name" value="NAD(P)-binding Rossmann-like Domain"/>
    <property type="match status" value="1"/>
</dbReference>
<dbReference type="InterPro" id="IPR013149">
    <property type="entry name" value="ADH-like_C"/>
</dbReference>
<dbReference type="InterPro" id="IPR013154">
    <property type="entry name" value="ADH-like_N"/>
</dbReference>
<dbReference type="InterPro" id="IPR002328">
    <property type="entry name" value="ADH_Zn_CS"/>
</dbReference>
<dbReference type="InterPro" id="IPR011032">
    <property type="entry name" value="GroES-like_sf"/>
</dbReference>
<dbReference type="InterPro" id="IPR036291">
    <property type="entry name" value="NAD(P)-bd_dom_sf"/>
</dbReference>
<dbReference type="InterPro" id="IPR020843">
    <property type="entry name" value="PKS_ER"/>
</dbReference>
<dbReference type="NCBIfam" id="NF006940">
    <property type="entry name" value="PRK09422.1"/>
    <property type="match status" value="1"/>
</dbReference>
<dbReference type="PANTHER" id="PTHR42940">
    <property type="entry name" value="ALCOHOL DEHYDROGENASE 1-RELATED"/>
    <property type="match status" value="1"/>
</dbReference>
<dbReference type="PANTHER" id="PTHR42940:SF8">
    <property type="entry name" value="VACUOLAR PROTEIN SORTING-ASSOCIATED PROTEIN 11"/>
    <property type="match status" value="1"/>
</dbReference>
<dbReference type="Pfam" id="PF08240">
    <property type="entry name" value="ADH_N"/>
    <property type="match status" value="1"/>
</dbReference>
<dbReference type="Pfam" id="PF00107">
    <property type="entry name" value="ADH_zinc_N"/>
    <property type="match status" value="1"/>
</dbReference>
<dbReference type="SMART" id="SM00829">
    <property type="entry name" value="PKS_ER"/>
    <property type="match status" value="1"/>
</dbReference>
<dbReference type="SUPFAM" id="SSF50129">
    <property type="entry name" value="GroES-like"/>
    <property type="match status" value="1"/>
</dbReference>
<dbReference type="SUPFAM" id="SSF51735">
    <property type="entry name" value="NAD(P)-binding Rossmann-fold domains"/>
    <property type="match status" value="1"/>
</dbReference>
<dbReference type="PROSITE" id="PS00059">
    <property type="entry name" value="ADH_ZINC"/>
    <property type="match status" value="1"/>
</dbReference>
<name>ADH1_GEOSE</name>
<accession>P12311</accession>
<evidence type="ECO:0000250" key="1"/>
<evidence type="ECO:0000269" key="2">
    <source>
    </source>
</evidence>
<evidence type="ECO:0000305" key="3"/>
<sequence length="337" mass="36100">MKAAVVEQFKKPLQVKEVEKPKISYGEVLVRIKACGVCHTDLHAAHGDWPVKPKLPLIPGHEGVGVIEEVGPGVTHLKVGDRVGIPWLYSACGHCDYCLSGQETLCERQQNAGYSVDGGYAEYCRAAADYVVKIPDNLSFEEAAPIFCAGVTTYKALKVTGAKPGEWVAIYGIGGLGHVAVQYAKAMGLNVVAVDLGDEKLELAKQLGADLVVNPKHDDAAQWIKEKVGGVHATVVTAVSKAAFESAYKSIRRGGACVLVGLPPEEIPIPIFDTVLNGVKIIGSIVGTRKDLQEALQFAAEGKVKTIVEVQPLENINDVFDRMLKGQINGRVVLKVD</sequence>
<reference key="1">
    <citation type="journal article" date="1992" name="J. Bacteriol.">
        <title>Cloning and sequencing of the gene coding for alcohol dehydrogenase of Bacillus stearothermophilus and rational shift of the optimum pH.</title>
        <authorList>
            <person name="Sakoda H."/>
            <person name="Imanaka T."/>
        </authorList>
    </citation>
    <scope>NUCLEOTIDE SEQUENCE [GENOMIC DNA]</scope>
    <scope>MUTAGENESIS</scope>
    <source>
        <strain>ATCC 29609 / DSM 2027 / NCA 1503 / NCIMB 8924</strain>
    </source>
</reference>
<reference key="2">
    <citation type="journal article" date="1973" name="FEBS Lett.">
        <title>Amino acid sequence homology in alcohol dehydrogenase.</title>
        <authorList>
            <person name="Bridgen J."/>
            <person name="Kolb E."/>
            <person name="Harris J.I."/>
        </authorList>
    </citation>
    <scope>PROTEIN SEQUENCE OF 1-45</scope>
</reference>
<reference key="3">
    <citation type="journal article" date="1979" name="Eur. J. Biochem.">
        <title>Identification of the amino acid residue modified in Bacillus stearothermophilus alcohol dehydrogenase by the NAD+ analogue 4-(3-bromoacetylpyridinio)butyldiphosphoadenosine.</title>
        <authorList>
            <person name="Jeck R."/>
            <person name="Woenckhaus C."/>
            <person name="Harris J.I."/>
            <person name="Runswick M.J."/>
        </authorList>
    </citation>
    <scope>PROTEIN SEQUENCE OF 34-54</scope>
</reference>
<reference key="4">
    <citation type="journal article" date="1994" name="Biochim. Biophys. Acta">
        <title>Gene structure and amino acid sequences of alcohol dehydrogenases of Bacillus stearothermophilus.</title>
        <authorList>
            <person name="Robinson G.A."/>
            <person name="Bailey C.J."/>
            <person name="Dowds B.C.A."/>
        </authorList>
    </citation>
    <scope>PROTEIN SEQUENCE OF 1-37; 188-197; 247-263 AND 324-336</scope>
    <source>
        <strain>ATCC 29609 / DSM 2027 / NCA 1503 / NCIMB 8924</strain>
    </source>
</reference>
<feature type="chain" id="PRO_0000160736" description="Alcohol dehydrogenase">
    <location>
        <begin position="1"/>
        <end position="337"/>
    </location>
</feature>
<feature type="binding site" evidence="1">
    <location>
        <position position="38"/>
    </location>
    <ligand>
        <name>Zn(2+)</name>
        <dbReference type="ChEBI" id="CHEBI:29105"/>
        <label>1</label>
        <note>catalytic</note>
    </ligand>
</feature>
<feature type="binding site" evidence="1">
    <location>
        <position position="61"/>
    </location>
    <ligand>
        <name>Zn(2+)</name>
        <dbReference type="ChEBI" id="CHEBI:29105"/>
        <label>1</label>
        <note>catalytic</note>
    </ligand>
</feature>
<feature type="binding site" evidence="1">
    <location>
        <position position="92"/>
    </location>
    <ligand>
        <name>Zn(2+)</name>
        <dbReference type="ChEBI" id="CHEBI:29105"/>
        <label>2</label>
    </ligand>
</feature>
<feature type="binding site" evidence="1">
    <location>
        <position position="95"/>
    </location>
    <ligand>
        <name>Zn(2+)</name>
        <dbReference type="ChEBI" id="CHEBI:29105"/>
        <label>2</label>
    </ligand>
</feature>
<feature type="binding site" evidence="1">
    <location>
        <position position="98"/>
    </location>
    <ligand>
        <name>Zn(2+)</name>
        <dbReference type="ChEBI" id="CHEBI:29105"/>
        <label>2</label>
    </ligand>
</feature>
<feature type="binding site" evidence="1">
    <location>
        <position position="106"/>
    </location>
    <ligand>
        <name>Zn(2+)</name>
        <dbReference type="ChEBI" id="CHEBI:29105"/>
        <label>2</label>
    </ligand>
</feature>
<feature type="binding site" evidence="1">
    <location>
        <position position="148"/>
    </location>
    <ligand>
        <name>Zn(2+)</name>
        <dbReference type="ChEBI" id="CHEBI:29105"/>
        <label>1</label>
        <note>catalytic</note>
    </ligand>
</feature>
<feature type="binding site" evidence="1">
    <location>
        <begin position="172"/>
        <end position="177"/>
    </location>
    <ligand>
        <name>NAD(+)</name>
        <dbReference type="ChEBI" id="CHEBI:57540"/>
    </ligand>
</feature>
<feature type="binding site" evidence="1">
    <location>
        <position position="195"/>
    </location>
    <ligand>
        <name>NAD(+)</name>
        <dbReference type="ChEBI" id="CHEBI:57540"/>
    </ligand>
</feature>
<feature type="binding site" evidence="1">
    <location>
        <position position="200"/>
    </location>
    <ligand>
        <name>NAD(+)</name>
        <dbReference type="ChEBI" id="CHEBI:57540"/>
    </ligand>
</feature>
<feature type="binding site" evidence="1">
    <location>
        <begin position="260"/>
        <end position="262"/>
    </location>
    <ligand>
        <name>NAD(+)</name>
        <dbReference type="ChEBI" id="CHEBI:57540"/>
    </ligand>
</feature>
<feature type="binding site" evidence="1">
    <location>
        <position position="331"/>
    </location>
    <ligand>
        <name>NAD(+)</name>
        <dbReference type="ChEBI" id="CHEBI:57540"/>
    </ligand>
</feature>
<feature type="mutagenesis site" description="No activity." evidence="2">
    <original>C</original>
    <variation>S</variation>
    <location>
        <position position="38"/>
    </location>
</feature>
<feature type="mutagenesis site" description="No activity." evidence="2">
    <original>T</original>
    <variation>A</variation>
    <location>
        <position position="40"/>
    </location>
</feature>
<feature type="mutagenesis site" description="Little decrease in activity." evidence="2">
    <original>T</original>
    <variation>S</variation>
    <location>
        <position position="40"/>
    </location>
</feature>
<feature type="mutagenesis site" description="No activity." evidence="2">
    <original>H</original>
    <variation>A</variation>
    <location>
        <position position="43"/>
    </location>
</feature>
<feature type="mutagenesis site" description="Higher level of activity at pH 9." evidence="2">
    <original>H</original>
    <variation>R</variation>
    <location>
        <position position="43"/>
    </location>
</feature>
<feature type="sequence conflict" description="In Ref. 2; AA sequence." evidence="3" ref="2">
    <location>
        <position position="22"/>
    </location>
</feature>
<feature type="sequence conflict" description="In Ref. 2; AA sequence." evidence="3" ref="2">
    <location>
        <position position="33"/>
    </location>
</feature>
<feature type="sequence conflict" description="In Ref. 3; AA sequence." evidence="3" ref="3">
    <original>KP</original>
    <variation>PK</variation>
    <location>
        <begin position="52"/>
        <end position="53"/>
    </location>
</feature>
<gene>
    <name type="primary">adhT</name>
</gene>
<comment type="function">
    <text>NAD(+)-dependent alcohol dehydrogenase.</text>
</comment>
<comment type="catalytic activity">
    <reaction>
        <text>a primary alcohol + NAD(+) = an aldehyde + NADH + H(+)</text>
        <dbReference type="Rhea" id="RHEA:10736"/>
        <dbReference type="ChEBI" id="CHEBI:15378"/>
        <dbReference type="ChEBI" id="CHEBI:15734"/>
        <dbReference type="ChEBI" id="CHEBI:17478"/>
        <dbReference type="ChEBI" id="CHEBI:57540"/>
        <dbReference type="ChEBI" id="CHEBI:57945"/>
        <dbReference type="EC" id="1.1.1.1"/>
    </reaction>
</comment>
<comment type="catalytic activity">
    <reaction>
        <text>a secondary alcohol + NAD(+) = a ketone + NADH + H(+)</text>
        <dbReference type="Rhea" id="RHEA:10740"/>
        <dbReference type="ChEBI" id="CHEBI:15378"/>
        <dbReference type="ChEBI" id="CHEBI:17087"/>
        <dbReference type="ChEBI" id="CHEBI:35681"/>
        <dbReference type="ChEBI" id="CHEBI:57540"/>
        <dbReference type="ChEBI" id="CHEBI:57945"/>
        <dbReference type="EC" id="1.1.1.1"/>
    </reaction>
</comment>
<comment type="cofactor">
    <cofactor evidence="1">
        <name>Zn(2+)</name>
        <dbReference type="ChEBI" id="CHEBI:29105"/>
    </cofactor>
    <text evidence="1">Binds 2 Zn(2+) ions per subunit.</text>
</comment>
<comment type="activity regulation">
    <text>Substrate inhibition is not observed with any alcohols, and the enzyme-NADH dissociation is not considered to be a rate-limiting step.</text>
</comment>
<comment type="biophysicochemical properties">
    <temperatureDependence>
        <text>Thermostable.</text>
    </temperatureDependence>
</comment>
<comment type="similarity">
    <text evidence="3">Belongs to the zinc-containing alcohol dehydrogenase family.</text>
</comment>
<keyword id="KW-0903">Direct protein sequencing</keyword>
<keyword id="KW-0479">Metal-binding</keyword>
<keyword id="KW-0520">NAD</keyword>
<keyword id="KW-0560">Oxidoreductase</keyword>
<keyword id="KW-0862">Zinc</keyword>
<protein>
    <recommendedName>
        <fullName>Alcohol dehydrogenase</fullName>
        <ecNumber>1.1.1.1</ecNumber>
    </recommendedName>
    <alternativeName>
        <fullName>ADH-T</fullName>
    </alternativeName>
</protein>